<gene>
    <name evidence="6" type="primary">pkiC</name>
    <name type="ORF">AN3381</name>
</gene>
<dbReference type="EC" id="2.3.1.86" evidence="5"/>
<dbReference type="EC" id="4.2.1.59" evidence="1"/>
<dbReference type="EC" id="1.3.1.9" evidence="1"/>
<dbReference type="EC" id="2.3.1.38" evidence="1"/>
<dbReference type="EC" id="2.3.1.39" evidence="1"/>
<dbReference type="EC" id="3.1.2.14" evidence="1"/>
<dbReference type="EMBL" id="BN001306">
    <property type="protein sequence ID" value="CBF82821.1"/>
    <property type="molecule type" value="Genomic_DNA"/>
</dbReference>
<dbReference type="EMBL" id="AACD01000055">
    <property type="protein sequence ID" value="EAA63349.1"/>
    <property type="molecule type" value="Genomic_DNA"/>
</dbReference>
<dbReference type="RefSeq" id="XP_660985.1">
    <property type="nucleotide sequence ID" value="XM_655893.1"/>
</dbReference>
<dbReference type="SMR" id="A0A1U8QK63"/>
<dbReference type="STRING" id="227321.Q5B7U9"/>
<dbReference type="EnsemblFungi" id="CBF82821">
    <property type="protein sequence ID" value="CBF82821"/>
    <property type="gene ID" value="ANIA_03381"/>
</dbReference>
<dbReference type="KEGG" id="ani:ANIA_03381"/>
<dbReference type="eggNOG" id="ENOG502SK0D">
    <property type="taxonomic scope" value="Eukaryota"/>
</dbReference>
<dbReference type="HOGENOM" id="CLU_000114_5_0_1"/>
<dbReference type="InParanoid" id="A0A1U8QK63"/>
<dbReference type="OMA" id="MVMPLEK"/>
<dbReference type="OrthoDB" id="4251012at2759"/>
<dbReference type="Proteomes" id="UP000000560">
    <property type="component" value="Chromosome VI"/>
</dbReference>
<dbReference type="GO" id="GO:0005835">
    <property type="term" value="C:fatty acid synthase complex"/>
    <property type="evidence" value="ECO:0000318"/>
    <property type="project" value="GO_Central"/>
</dbReference>
<dbReference type="GO" id="GO:0019171">
    <property type="term" value="F:(3R)-hydroxyacyl-[acyl-carrier-protein] dehydratase activity"/>
    <property type="evidence" value="ECO:0007669"/>
    <property type="project" value="UniProtKB-EC"/>
</dbReference>
<dbReference type="GO" id="GO:0004313">
    <property type="term" value="F:[acyl-carrier-protein] S-acetyltransferase activity"/>
    <property type="evidence" value="ECO:0007669"/>
    <property type="project" value="UniProtKB-EC"/>
</dbReference>
<dbReference type="GO" id="GO:0004314">
    <property type="term" value="F:[acyl-carrier-protein] S-malonyltransferase activity"/>
    <property type="evidence" value="ECO:0007669"/>
    <property type="project" value="UniProtKB-EC"/>
</dbReference>
<dbReference type="GO" id="GO:0004318">
    <property type="term" value="F:enoyl-[acyl-carrier-protein] reductase (NADH) activity"/>
    <property type="evidence" value="ECO:0007669"/>
    <property type="project" value="UniProtKB-EC"/>
</dbReference>
<dbReference type="GO" id="GO:0004312">
    <property type="term" value="F:fatty acid synthase activity"/>
    <property type="evidence" value="ECO:0007669"/>
    <property type="project" value="InterPro"/>
</dbReference>
<dbReference type="GO" id="GO:0016297">
    <property type="term" value="F:fatty acyl-[ACP] hydrolase activity"/>
    <property type="evidence" value="ECO:0007669"/>
    <property type="project" value="UniProtKB-EC"/>
</dbReference>
<dbReference type="GO" id="GO:0004321">
    <property type="term" value="F:fatty-acyl-CoA synthase activity"/>
    <property type="evidence" value="ECO:0007669"/>
    <property type="project" value="UniProtKB-EC"/>
</dbReference>
<dbReference type="GO" id="GO:0042759">
    <property type="term" value="P:long-chain fatty acid biosynthetic process"/>
    <property type="evidence" value="ECO:0000318"/>
    <property type="project" value="GO_Central"/>
</dbReference>
<dbReference type="CDD" id="cd03447">
    <property type="entry name" value="FAS_MaoC"/>
    <property type="match status" value="1"/>
</dbReference>
<dbReference type="FunFam" id="3.20.20.70:FF:000078">
    <property type="entry name" value="Fatty acid synthase beta subunit dehydratase"/>
    <property type="match status" value="1"/>
</dbReference>
<dbReference type="FunFam" id="3.40.366.10:FF:000006">
    <property type="entry name" value="Fatty acid synthase beta subunit dehydratase"/>
    <property type="match status" value="1"/>
</dbReference>
<dbReference type="Gene3D" id="1.20.1050.120">
    <property type="match status" value="1"/>
</dbReference>
<dbReference type="Gene3D" id="1.20.930.70">
    <property type="match status" value="1"/>
</dbReference>
<dbReference type="Gene3D" id="3.30.1120.100">
    <property type="match status" value="1"/>
</dbReference>
<dbReference type="Gene3D" id="3.30.70.3320">
    <property type="match status" value="1"/>
</dbReference>
<dbReference type="Gene3D" id="6.10.60.10">
    <property type="match status" value="1"/>
</dbReference>
<dbReference type="Gene3D" id="3.20.20.70">
    <property type="entry name" value="Aldolase class I"/>
    <property type="match status" value="1"/>
</dbReference>
<dbReference type="Gene3D" id="3.10.129.10">
    <property type="entry name" value="Hotdog Thioesterase"/>
    <property type="match status" value="1"/>
</dbReference>
<dbReference type="Gene3D" id="3.40.366.10">
    <property type="entry name" value="Malonyl-Coenzyme A Acyl Carrier Protein, domain 2"/>
    <property type="match status" value="3"/>
</dbReference>
<dbReference type="InterPro" id="IPR001227">
    <property type="entry name" value="Ac_transferase_dom_sf"/>
</dbReference>
<dbReference type="InterPro" id="IPR014043">
    <property type="entry name" value="Acyl_transferase_dom"/>
</dbReference>
<dbReference type="InterPro" id="IPR016035">
    <property type="entry name" value="Acyl_Trfase/lysoPLipase"/>
</dbReference>
<dbReference type="InterPro" id="IPR013785">
    <property type="entry name" value="Aldolase_TIM"/>
</dbReference>
<dbReference type="InterPro" id="IPR039569">
    <property type="entry name" value="FAS1-like_DH_region"/>
</dbReference>
<dbReference type="InterPro" id="IPR016452">
    <property type="entry name" value="Fas1/AflB-like"/>
</dbReference>
<dbReference type="InterPro" id="IPR013565">
    <property type="entry name" value="Fas1/AflB-like_central"/>
</dbReference>
<dbReference type="InterPro" id="IPR003965">
    <property type="entry name" value="Fatty_acid_synthase"/>
</dbReference>
<dbReference type="InterPro" id="IPR050830">
    <property type="entry name" value="Fungal_FAS"/>
</dbReference>
<dbReference type="InterPro" id="IPR029069">
    <property type="entry name" value="HotDog_dom_sf"/>
</dbReference>
<dbReference type="InterPro" id="IPR002539">
    <property type="entry name" value="MaoC-like_dom"/>
</dbReference>
<dbReference type="InterPro" id="IPR032088">
    <property type="entry name" value="SAT"/>
</dbReference>
<dbReference type="PANTHER" id="PTHR10982:SF21">
    <property type="entry name" value="FATTY ACID SYNTHASE SUBUNIT BETA"/>
    <property type="match status" value="1"/>
</dbReference>
<dbReference type="PANTHER" id="PTHR10982">
    <property type="entry name" value="MALONYL COA-ACYL CARRIER PROTEIN TRANSACYLASE"/>
    <property type="match status" value="1"/>
</dbReference>
<dbReference type="Pfam" id="PF00698">
    <property type="entry name" value="Acyl_transf_1"/>
    <property type="match status" value="1"/>
</dbReference>
<dbReference type="Pfam" id="PF08354">
    <property type="entry name" value="Fas1-AflB-like_hel"/>
    <property type="match status" value="1"/>
</dbReference>
<dbReference type="Pfam" id="PF13452">
    <property type="entry name" value="FAS1_DH_region"/>
    <property type="match status" value="1"/>
</dbReference>
<dbReference type="Pfam" id="PF22235">
    <property type="entry name" value="FAS1_thioest_ins"/>
    <property type="match status" value="1"/>
</dbReference>
<dbReference type="Pfam" id="PF01575">
    <property type="entry name" value="MaoC_dehydratas"/>
    <property type="match status" value="1"/>
</dbReference>
<dbReference type="Pfam" id="PF16073">
    <property type="entry name" value="SAT"/>
    <property type="match status" value="1"/>
</dbReference>
<dbReference type="PIRSF" id="PIRSF005562">
    <property type="entry name" value="FAS_yeast_beta"/>
    <property type="match status" value="1"/>
</dbReference>
<dbReference type="PRINTS" id="PR01483">
    <property type="entry name" value="FASYNTHASE"/>
</dbReference>
<dbReference type="SUPFAM" id="SSF52151">
    <property type="entry name" value="FabD/lysophospholipase-like"/>
    <property type="match status" value="2"/>
</dbReference>
<dbReference type="SUPFAM" id="SSF51395">
    <property type="entry name" value="FMN-linked oxidoreductases"/>
    <property type="match status" value="1"/>
</dbReference>
<dbReference type="SUPFAM" id="SSF54637">
    <property type="entry name" value="Thioesterase/thiol ester dehydrase-isomerase"/>
    <property type="match status" value="2"/>
</dbReference>
<sequence length="1872" mass="207117">MALEEVPSVSRDLDHSALRALSSASPSSLPSSCSRSTTSLLFQSKGIEFRLSIPDTFLSLVEPHRNAFLASYSTQGNTQSPLELALSFLYFLLDQKVSPLVLSSVLRAFNLEFLGNRSEIHSLIADLTPIPKQRQRWLGIYYRFLEASDDKRAEIPLSSIFQHARTNEFQLMAVFGGQGECSRTCLNEFAELYSSYEPMLRRLVGVIGPCLYNLSTSDEYSSYYRNQPLDLKAWITDENHVPDLGFVASAPVSVPVIGALSLARYCVTCHITGCNPGLMRSMLRTATGHSQGLLAAIVVAVSHSWDSFYQATEEVIELLFRLGWECHHAAPCSMVPAANYADVDGANGPSYMLSLRGLKRQETEATIDHVNASLPEDKRLYLALINAYDQFVVAGPVASLLRLESHLVEITSKDIDQSRIPFRDRKPYIQHSFLPVSTPFHTPYLTRAAARVKKQFAARPIPTRRLAIPVYHTHTGLDLRKQGGCALSIAIDAIASEPCNWPCAVASYHASHILTFDRGGLAPLIKRVREGCGVRVVQVADLDTRDSEMATMRDLFATKLLPTSTKLQSWGQQFRPGLASGPKIQLETRLNRVLGAPPIMVAGMTPTTVHPDFVAAIMNAGYHAELAGGGYHNASAMEAAIYDLVSSIPKERGITCNLIYANPRSISWQIELLRRLSNGNVRIDGLTIGAGVPSLTVASEYIETLGLRHISFKPGSVAAIRKVVEIAREHPDFPVILQWTGGRGGGHHSFEDFHAPIIATYGIIRQEPNVYLVAGSGFGDSDSVYPYLTGSWSVAMGHPAMPFDGILLGSRMMVAKEAHTSPAVRRIIAATPGVSDSEWEKTYSGPAGGVITVTSEMGEPIHKIATRGVCLWADLDKTVFSLSRRDRLTYLAQHRRSIIQRLNADFAKPWFGCNSDGEAVDLEDMTYLEVLKRLTALMFVPNKQWIDASYIEFTMTIAQRWLQRLQFDSEAAASLTISLLRKAPDRFLAIFADVCPTAEGDLLNPEDISFFLMQCKTPGRKPVNFIPALDDDFEFYFKKDSLWQAEDVDAVLDQDAERVCILHGPIAARYSKSDSEPAGYILDSILNGVVARLRETSTAEMLLPKLERGHTTPASWSTLSLTERDTSEETSDTSITSLSELIENHSFSSGGVDSVPRPSHPLWMRALLEDDVVLQGTLRQKNPFRDLIQSSPNTVVNYNQDSSELMVTAQEPYHISSFMRAVCHDGVMDKRNERIKSFYSLLWFGHDCDTSQSLNGVFYGPDITLTEDLLDEYNATIGPAYSDHRQMVPSTDVLPISMGIIIAWDVISRPLILRQIGGDLLRLVHRSNTFEYYSDTRLRLGDSVSSRSEVQAVYDDDGGRVVIVEAQILRSRVPVMTVTSTFLFRGSKGTTVPAFRRAREQKWTYDVTSEFEESILLSRNWFRPCDPSLTLVGKSMIFDLNSLVKYHDDGNMELHVQGTAMSQTNGQQQKLAIVDFRNTCTGNPVLDFLQRRGKLAEPRTEFKIPGWAGKSTMDIQMPPSNEPYAQLSKDFNPIHTSPIFSSLAGVPGTLCHGMCTSAIAERVLEHLGLGGDRERLRRFEARFTDMVMPLEKLVVEIKHTGMVDGRMCFSILAKRKETDERVLEGDAEVEQPRTAYLFTGQGSQSKGMGMDLYKTSTGQFLLTNKGGLFWTSCKTTQSPLPIRQKYLDITTEVVLPNGKRVQKPVFPGLTPTSTSYTFRHPRGLLYSTQFAQPAILLFEAAAFAELRAKGYVSHGAVYAGHSLGEFGALSALSRSVPTGALVELAFYRGSVMQASVASDNDGGTTYGMVAMNPKRVGTFFTQTTLDRLVSQIAAQSQELLEIVNFNIEGEQYVCSGTIDRPISGGTWPSLSG</sequence>
<accession>A0A1U8QK63</accession>
<accession>C8VHP1</accession>
<accession>Q5B7U9</accession>
<evidence type="ECO:0000250" key="1">
    <source>
        <dbReference type="UniProtKB" id="P07149"/>
    </source>
</evidence>
<evidence type="ECO:0000250" key="2">
    <source>
        <dbReference type="UniProtKB" id="Q8TGA1"/>
    </source>
</evidence>
<evidence type="ECO:0000255" key="3"/>
<evidence type="ECO:0000256" key="4">
    <source>
        <dbReference type="SAM" id="MobiDB-lite"/>
    </source>
</evidence>
<evidence type="ECO:0000269" key="5">
    <source>
    </source>
</evidence>
<evidence type="ECO:0000303" key="6">
    <source>
    </source>
</evidence>
<evidence type="ECO:0000305" key="7"/>
<name>PKIC_EMENI</name>
<proteinExistence type="evidence at protein level"/>
<feature type="chain" id="PRO_0000450879" description="Fatty acid synthase beta subunit pkiC">
    <location>
        <begin position="1"/>
        <end position="1872"/>
    </location>
</feature>
<feature type="domain" description="MaoC-like" evidence="3">
    <location>
        <begin position="1518"/>
        <end position="1617"/>
    </location>
</feature>
<feature type="region of interest" description="Acetyltransferase (AT) domain" evidence="2">
    <location>
        <begin position="174"/>
        <end position="425"/>
    </location>
</feature>
<feature type="region of interest" description="Enoyl reductase (ER) domain" evidence="2">
    <location>
        <begin position="591"/>
        <end position="836"/>
    </location>
</feature>
<feature type="region of interest" description="Disordered" evidence="4">
    <location>
        <begin position="1111"/>
        <end position="1132"/>
    </location>
</feature>
<feature type="region of interest" description="Dehydratase (DH) domain" evidence="2">
    <location>
        <begin position="1158"/>
        <end position="1597"/>
    </location>
</feature>
<comment type="function">
    <text evidence="5">Fatty acid synthase beta subunit; part of the pki gene cluster that mediates the biosynthesis of 2,4-dihydroxy-3-methyl-6-(2-oxoundecyl)benzaldehyde (PubMed:22510154). The first step in the pathway is the generation of the decanoyl starter unit by the FAS composed of subunits pkiB and pkiC, which is then transferred directly from the FAS to the SAT domain of the non-reducing polyketide synthase pkiA (PubMed:22510154). PkiA condenses the decanoyyl starter unit with 4 malonyl-CoA units and performs one methylation step to yield 2,4-dihydroxy-3-methyl-6-(2-oxoundecyl)benzaldehyde (PubMed:22510154).</text>
</comment>
<comment type="catalytic activity">
    <reaction evidence="1">
        <text>acetyl-CoA + n malonyl-CoA + 2n NADPH + 4n H(+) = a long-chain-acyl-CoA + n CoA + n CO2 + 2n NADP(+).</text>
        <dbReference type="EC" id="2.3.1.86"/>
    </reaction>
</comment>
<comment type="catalytic activity">
    <reaction evidence="1">
        <text>holo-[ACP] + acetyl-CoA = acetyl-[ACP] + CoA</text>
        <dbReference type="Rhea" id="RHEA:41788"/>
        <dbReference type="Rhea" id="RHEA-COMP:9621"/>
        <dbReference type="Rhea" id="RHEA-COMP:9685"/>
        <dbReference type="ChEBI" id="CHEBI:57287"/>
        <dbReference type="ChEBI" id="CHEBI:57288"/>
        <dbReference type="ChEBI" id="CHEBI:64479"/>
        <dbReference type="ChEBI" id="CHEBI:78446"/>
        <dbReference type="EC" id="2.3.1.38"/>
    </reaction>
</comment>
<comment type="catalytic activity">
    <reaction evidence="1">
        <text>holo-[ACP] + malonyl-CoA = malonyl-[ACP] + CoA</text>
        <dbReference type="Rhea" id="RHEA:41792"/>
        <dbReference type="Rhea" id="RHEA-COMP:9623"/>
        <dbReference type="Rhea" id="RHEA-COMP:9685"/>
        <dbReference type="ChEBI" id="CHEBI:57287"/>
        <dbReference type="ChEBI" id="CHEBI:57384"/>
        <dbReference type="ChEBI" id="CHEBI:64479"/>
        <dbReference type="ChEBI" id="CHEBI:78449"/>
        <dbReference type="EC" id="2.3.1.39"/>
    </reaction>
</comment>
<comment type="catalytic activity">
    <reaction evidence="1">
        <text>a (3R)-hydroxyacyl-[ACP] = a (2E)-enoyl-[ACP] + H2O</text>
        <dbReference type="Rhea" id="RHEA:13097"/>
        <dbReference type="Rhea" id="RHEA-COMP:9925"/>
        <dbReference type="Rhea" id="RHEA-COMP:9945"/>
        <dbReference type="ChEBI" id="CHEBI:15377"/>
        <dbReference type="ChEBI" id="CHEBI:78784"/>
        <dbReference type="ChEBI" id="CHEBI:78827"/>
        <dbReference type="EC" id="4.2.1.59"/>
    </reaction>
</comment>
<comment type="catalytic activity">
    <reaction evidence="1">
        <text>a 2,3-saturated acyl-[ACP] + NAD(+) = a (2E)-enoyl-[ACP] + NADH + H(+)</text>
        <dbReference type="Rhea" id="RHEA:10240"/>
        <dbReference type="Rhea" id="RHEA-COMP:9925"/>
        <dbReference type="Rhea" id="RHEA-COMP:9926"/>
        <dbReference type="ChEBI" id="CHEBI:15378"/>
        <dbReference type="ChEBI" id="CHEBI:57540"/>
        <dbReference type="ChEBI" id="CHEBI:57945"/>
        <dbReference type="ChEBI" id="CHEBI:78784"/>
        <dbReference type="ChEBI" id="CHEBI:78785"/>
        <dbReference type="EC" id="1.3.1.9"/>
    </reaction>
</comment>
<comment type="catalytic activity">
    <reaction evidence="1">
        <text>(9Z)-octadecenoyl-[ACP] + H2O = (9Z)-octadecenoate + holo-[ACP] + H(+)</text>
        <dbReference type="Rhea" id="RHEA:15057"/>
        <dbReference type="Rhea" id="RHEA-COMP:9685"/>
        <dbReference type="Rhea" id="RHEA-COMP:9924"/>
        <dbReference type="ChEBI" id="CHEBI:15377"/>
        <dbReference type="ChEBI" id="CHEBI:15378"/>
        <dbReference type="ChEBI" id="CHEBI:30823"/>
        <dbReference type="ChEBI" id="CHEBI:64479"/>
        <dbReference type="ChEBI" id="CHEBI:78783"/>
        <dbReference type="EC" id="3.1.2.14"/>
    </reaction>
</comment>
<comment type="pathway">
    <text evidence="5">Secondary metabolite biosynthesis.</text>
</comment>
<comment type="subunit">
    <text evidence="1">[Alpha(6)beta(6)] hexamers of two multifunctional subunits (alpha and beta).</text>
</comment>
<comment type="similarity">
    <text evidence="7">Belongs to the fungal fatty acid synthetase subunit beta family.</text>
</comment>
<keyword id="KW-0378">Hydrolase</keyword>
<keyword id="KW-0456">Lyase</keyword>
<keyword id="KW-0511">Multifunctional enzyme</keyword>
<keyword id="KW-0520">NAD</keyword>
<keyword id="KW-0521">NADP</keyword>
<keyword id="KW-0560">Oxidoreductase</keyword>
<keyword id="KW-1185">Reference proteome</keyword>
<keyword id="KW-0808">Transferase</keyword>
<organism>
    <name type="scientific">Emericella nidulans (strain FGSC A4 / ATCC 38163 / CBS 112.46 / NRRL 194 / M139)</name>
    <name type="common">Aspergillus nidulans</name>
    <dbReference type="NCBI Taxonomy" id="227321"/>
    <lineage>
        <taxon>Eukaryota</taxon>
        <taxon>Fungi</taxon>
        <taxon>Dikarya</taxon>
        <taxon>Ascomycota</taxon>
        <taxon>Pezizomycotina</taxon>
        <taxon>Eurotiomycetes</taxon>
        <taxon>Eurotiomycetidae</taxon>
        <taxon>Eurotiales</taxon>
        <taxon>Aspergillaceae</taxon>
        <taxon>Aspergillus</taxon>
        <taxon>Aspergillus subgen. Nidulantes</taxon>
    </lineage>
</organism>
<reference key="1">
    <citation type="journal article" date="2005" name="Nature">
        <title>Sequencing of Aspergillus nidulans and comparative analysis with A. fumigatus and A. oryzae.</title>
        <authorList>
            <person name="Galagan J.E."/>
            <person name="Calvo S.E."/>
            <person name="Cuomo C."/>
            <person name="Ma L.-J."/>
            <person name="Wortman J.R."/>
            <person name="Batzoglou S."/>
            <person name="Lee S.-I."/>
            <person name="Bastuerkmen M."/>
            <person name="Spevak C.C."/>
            <person name="Clutterbuck J."/>
            <person name="Kapitonov V."/>
            <person name="Jurka J."/>
            <person name="Scazzocchio C."/>
            <person name="Farman M.L."/>
            <person name="Butler J."/>
            <person name="Purcell S."/>
            <person name="Harris S."/>
            <person name="Braus G.H."/>
            <person name="Draht O."/>
            <person name="Busch S."/>
            <person name="D'Enfert C."/>
            <person name="Bouchier C."/>
            <person name="Goldman G.H."/>
            <person name="Bell-Pedersen D."/>
            <person name="Griffiths-Jones S."/>
            <person name="Doonan J.H."/>
            <person name="Yu J."/>
            <person name="Vienken K."/>
            <person name="Pain A."/>
            <person name="Freitag M."/>
            <person name="Selker E.U."/>
            <person name="Archer D.B."/>
            <person name="Penalva M.A."/>
            <person name="Oakley B.R."/>
            <person name="Momany M."/>
            <person name="Tanaka T."/>
            <person name="Kumagai T."/>
            <person name="Asai K."/>
            <person name="Machida M."/>
            <person name="Nierman W.C."/>
            <person name="Denning D.W."/>
            <person name="Caddick M.X."/>
            <person name="Hynes M."/>
            <person name="Paoletti M."/>
            <person name="Fischer R."/>
            <person name="Miller B.L."/>
            <person name="Dyer P.S."/>
            <person name="Sachs M.S."/>
            <person name="Osmani S.A."/>
            <person name="Birren B.W."/>
        </authorList>
    </citation>
    <scope>NUCLEOTIDE SEQUENCE [LARGE SCALE GENOMIC DNA]</scope>
    <source>
        <strain>FGSC A4 / ATCC 38163 / CBS 112.46 / NRRL 194 / M139</strain>
    </source>
</reference>
<reference key="2">
    <citation type="journal article" date="2009" name="Fungal Genet. Biol.">
        <title>The 2008 update of the Aspergillus nidulans genome annotation: a community effort.</title>
        <authorList>
            <person name="Wortman J.R."/>
            <person name="Gilsenan J.M."/>
            <person name="Joardar V."/>
            <person name="Deegan J."/>
            <person name="Clutterbuck J."/>
            <person name="Andersen M.R."/>
            <person name="Archer D."/>
            <person name="Bencina M."/>
            <person name="Braus G."/>
            <person name="Coutinho P."/>
            <person name="von Dohren H."/>
            <person name="Doonan J."/>
            <person name="Driessen A.J."/>
            <person name="Durek P."/>
            <person name="Espeso E."/>
            <person name="Fekete E."/>
            <person name="Flipphi M."/>
            <person name="Estrada C.G."/>
            <person name="Geysens S."/>
            <person name="Goldman G."/>
            <person name="de Groot P.W."/>
            <person name="Hansen K."/>
            <person name="Harris S.D."/>
            <person name="Heinekamp T."/>
            <person name="Helmstaedt K."/>
            <person name="Henrissat B."/>
            <person name="Hofmann G."/>
            <person name="Homan T."/>
            <person name="Horio T."/>
            <person name="Horiuchi H."/>
            <person name="James S."/>
            <person name="Jones M."/>
            <person name="Karaffa L."/>
            <person name="Karanyi Z."/>
            <person name="Kato M."/>
            <person name="Keller N."/>
            <person name="Kelly D.E."/>
            <person name="Kiel J.A."/>
            <person name="Kim J.M."/>
            <person name="van der Klei I.J."/>
            <person name="Klis F.M."/>
            <person name="Kovalchuk A."/>
            <person name="Krasevec N."/>
            <person name="Kubicek C.P."/>
            <person name="Liu B."/>
            <person name="Maccabe A."/>
            <person name="Meyer V."/>
            <person name="Mirabito P."/>
            <person name="Miskei M."/>
            <person name="Mos M."/>
            <person name="Mullins J."/>
            <person name="Nelson D.R."/>
            <person name="Nielsen J."/>
            <person name="Oakley B.R."/>
            <person name="Osmani S.A."/>
            <person name="Pakula T."/>
            <person name="Paszewski A."/>
            <person name="Paulsen I."/>
            <person name="Pilsyk S."/>
            <person name="Pocsi I."/>
            <person name="Punt P.J."/>
            <person name="Ram A.F."/>
            <person name="Ren Q."/>
            <person name="Robellet X."/>
            <person name="Robson G."/>
            <person name="Seiboth B."/>
            <person name="van Solingen P."/>
            <person name="Specht T."/>
            <person name="Sun J."/>
            <person name="Taheri-Talesh N."/>
            <person name="Takeshita N."/>
            <person name="Ussery D."/>
            <person name="vanKuyk P.A."/>
            <person name="Visser H."/>
            <person name="van de Vondervoort P.J."/>
            <person name="de Vries R.P."/>
            <person name="Walton J."/>
            <person name="Xiang X."/>
            <person name="Xiong Y."/>
            <person name="Zeng A.P."/>
            <person name="Brandt B.W."/>
            <person name="Cornell M.J."/>
            <person name="van den Hondel C.A."/>
            <person name="Visser J."/>
            <person name="Oliver S.G."/>
            <person name="Turner G."/>
        </authorList>
    </citation>
    <scope>GENOME REANNOTATION</scope>
    <source>
        <strain>FGSC A4 / ATCC 38163 / CBS 112.46 / NRRL 194 / M139</strain>
    </source>
</reference>
<reference key="3">
    <citation type="journal article" date="2012" name="J. Am. Chem. Soc.">
        <title>Illuminating the diversity of aromatic polyketide synthases in Aspergillus nidulans.</title>
        <authorList>
            <person name="Ahuja M."/>
            <person name="Chiang Y.M."/>
            <person name="Chang S.L."/>
            <person name="Praseuth M.B."/>
            <person name="Entwistle R."/>
            <person name="Sanchez J.F."/>
            <person name="Lo H.C."/>
            <person name="Yeh H.H."/>
            <person name="Oakley B.R."/>
            <person name="Wang C.C."/>
        </authorList>
    </citation>
    <scope>FUNCTION</scope>
    <scope>CATALYTIC ACTIVITY</scope>
    <scope>PATHWAY</scope>
</reference>
<protein>
    <recommendedName>
        <fullName evidence="6">Fatty acid synthase beta subunit pkiC</fullName>
        <ecNumber evidence="5">2.3.1.86</ecNumber>
    </recommendedName>
    <domain>
        <recommendedName>
            <fullName evidence="1">3-hydroxyacyl-[acyl-carrier-protein] dehydratase</fullName>
            <ecNumber evidence="1">4.2.1.59</ecNumber>
        </recommendedName>
    </domain>
    <domain>
        <recommendedName>
            <fullName evidence="1">Enoyl-[acyl-carrier-protein] reductase [NADH]</fullName>
            <ecNumber evidence="1">1.3.1.9</ecNumber>
        </recommendedName>
    </domain>
    <domain>
        <recommendedName>
            <fullName evidence="1">[Acyl-carrier-protein] acetyltransferase</fullName>
            <ecNumber evidence="1">2.3.1.38</ecNumber>
        </recommendedName>
    </domain>
    <domain>
        <recommendedName>
            <fullName evidence="1">[Acyl-carrier-protein] malonyltransferase</fullName>
            <ecNumber evidence="1">2.3.1.39</ecNumber>
        </recommendedName>
    </domain>
    <domain>
        <recommendedName>
            <fullName evidence="1">S-acyl fatty acid synthase thioesterase</fullName>
            <ecNumber evidence="1">3.1.2.14</ecNumber>
        </recommendedName>
        <alternativeName>
            <fullName evidence="6">Pki biosynthesis cluster protein C</fullName>
        </alternativeName>
    </domain>
</protein>